<protein>
    <recommendedName>
        <fullName evidence="1">Major capsid protein L1</fullName>
    </recommendedName>
</protein>
<organismHost>
    <name type="scientific">Homo sapiens</name>
    <name type="common">Human</name>
    <dbReference type="NCBI Taxonomy" id="9606"/>
</organismHost>
<dbReference type="EMBL" id="X74465">
    <property type="protein sequence ID" value="CAA52494.1"/>
    <property type="molecule type" value="Genomic_DNA"/>
</dbReference>
<dbReference type="PIR" id="S36537">
    <property type="entry name" value="S36537"/>
</dbReference>
<dbReference type="RefSeq" id="NP_041746.1">
    <property type="nucleotide sequence ID" value="NC_001576.1"/>
</dbReference>
<dbReference type="SMR" id="P36732"/>
<dbReference type="GeneID" id="1489377"/>
<dbReference type="KEGG" id="vg:1489377"/>
<dbReference type="OrthoDB" id="5037at10239"/>
<dbReference type="Proteomes" id="UP000009105">
    <property type="component" value="Genome"/>
</dbReference>
<dbReference type="GO" id="GO:0042025">
    <property type="term" value="C:host cell nucleus"/>
    <property type="evidence" value="ECO:0007669"/>
    <property type="project" value="UniProtKB-SubCell"/>
</dbReference>
<dbReference type="GO" id="GO:0039620">
    <property type="term" value="C:T=7 icosahedral viral capsid"/>
    <property type="evidence" value="ECO:0007669"/>
    <property type="project" value="UniProtKB-UniRule"/>
</dbReference>
<dbReference type="GO" id="GO:0005198">
    <property type="term" value="F:structural molecule activity"/>
    <property type="evidence" value="ECO:0007669"/>
    <property type="project" value="UniProtKB-UniRule"/>
</dbReference>
<dbReference type="GO" id="GO:0075509">
    <property type="term" value="P:endocytosis involved in viral entry into host cell"/>
    <property type="evidence" value="ECO:0007669"/>
    <property type="project" value="UniProtKB-KW"/>
</dbReference>
<dbReference type="GO" id="GO:0019062">
    <property type="term" value="P:virion attachment to host cell"/>
    <property type="evidence" value="ECO:0007669"/>
    <property type="project" value="UniProtKB-UniRule"/>
</dbReference>
<dbReference type="Gene3D" id="2.60.175.20">
    <property type="entry name" value="Major capsid L1 (late) superfamily, Papillomavirus"/>
    <property type="match status" value="2"/>
</dbReference>
<dbReference type="HAMAP" id="MF_04002">
    <property type="entry name" value="PPV_L1"/>
    <property type="match status" value="1"/>
</dbReference>
<dbReference type="InterPro" id="IPR002210">
    <property type="entry name" value="Capsid_L1_Papillomavir"/>
</dbReference>
<dbReference type="InterPro" id="IPR036973">
    <property type="entry name" value="Capsid_L1_sf_Papillomavir"/>
</dbReference>
<dbReference type="InterPro" id="IPR011222">
    <property type="entry name" value="dsDNA_vir_gr_I_capsid"/>
</dbReference>
<dbReference type="Pfam" id="PF00500">
    <property type="entry name" value="Late_protein_L1"/>
    <property type="match status" value="1"/>
</dbReference>
<dbReference type="PRINTS" id="PR00865">
    <property type="entry name" value="HPVCAPSIDL1"/>
</dbReference>
<dbReference type="SUPFAM" id="SSF88648">
    <property type="entry name" value="Group I dsDNA viruses"/>
    <property type="match status" value="1"/>
</dbReference>
<comment type="function">
    <text evidence="1">Forms an icosahedral capsid with a T=7 symmetry and a 50 nm diameter. The capsid is composed of 72 pentamers linked to each other by disulfide bonds and associated with L2 proteins. Binds to heparan sulfate proteoglycans on cell surface of basal layer keratinocytes to provide initial virion attachment. This binding mediates a conformational change in the virus capsid that facilitates efficient infection. The virion enters the host cell via endocytosis. During virus trafficking, L1 protein dissociates from the viral DNA and the genomic DNA is released to the host nucleus. The virion assembly takes place within the cell nucleus. Encapsulates the genomic DNA together with protein L2.</text>
</comment>
<comment type="subunit">
    <text evidence="1">Self-assembles into homopentamers. The capsid has an icosahedral symmetry and consists of 72 capsomers, with each capsomer being a pentamer of L1. Interacts with the minor capsid protein L2; this interaction is necessary for viral genome encapsidation. Interacts with protein E2; this interaction enhances E2-dependent replication and transcription activation.</text>
</comment>
<comment type="subcellular location">
    <subcellularLocation>
        <location evidence="1">Virion</location>
    </subcellularLocation>
    <subcellularLocation>
        <location evidence="1">Host nucleus</location>
    </subcellularLocation>
</comment>
<comment type="similarity">
    <text evidence="1">Belongs to the papillomaviridae L1 protein family.</text>
</comment>
<comment type="caution">
    <text evidence="3">It is uncertain whether Met-1 or Met-29 is the initiator.</text>
</comment>
<gene>
    <name evidence="1" type="primary">L1</name>
</gene>
<evidence type="ECO:0000255" key="1">
    <source>
        <dbReference type="HAMAP-Rule" id="MF_04002"/>
    </source>
</evidence>
<evidence type="ECO:0000256" key="2">
    <source>
        <dbReference type="SAM" id="MobiDB-lite"/>
    </source>
</evidence>
<evidence type="ECO:0000305" key="3"/>
<reference key="1">
    <citation type="journal article" date="1994" name="Curr. Top. Microbiol. Immunol.">
        <title>Primer-directed sequencing of human papillomavirus types.</title>
        <authorList>
            <person name="Delius H."/>
            <person name="Hofmann B."/>
        </authorList>
    </citation>
    <scope>NUCLEOTIDE SEQUENCE [GENOMIC DNA]</scope>
</reference>
<feature type="chain" id="PRO_0000133494" description="Major capsid protein L1">
    <location>
        <begin position="1"/>
        <end position="531"/>
    </location>
</feature>
<feature type="region of interest" description="Disordered" evidence="2">
    <location>
        <begin position="511"/>
        <end position="531"/>
    </location>
</feature>
<feature type="disulfide bond" description="Interchain (with C-456)" evidence="1">
    <location>
        <position position="203"/>
    </location>
</feature>
<feature type="disulfide bond" description="Interchain (with C-203)" evidence="1">
    <location>
        <position position="456"/>
    </location>
</feature>
<name>VL1_HPV10</name>
<accession>P36732</accession>
<organism>
    <name type="scientific">Human papillomavirus type 10</name>
    <dbReference type="NCBI Taxonomy" id="333759"/>
    <lineage>
        <taxon>Viruses</taxon>
        <taxon>Monodnaviria</taxon>
        <taxon>Shotokuvirae</taxon>
        <taxon>Cossaviricota</taxon>
        <taxon>Papovaviricetes</taxon>
        <taxon>Zurhausenvirales</taxon>
        <taxon>Papillomaviridae</taxon>
        <taxon>Firstpapillomavirinae</taxon>
        <taxon>Alphapapillomavirus</taxon>
        <taxon>Alphapapillomavirus 2</taxon>
    </lineage>
</organism>
<proteinExistence type="inferred from homology"/>
<sequence length="531" mass="59011">MAGISIFGLLPFTSPDIVAVNVSHIFLQMALWRSSDNLVYLPPTPVSKVLSTDDYVTRTNIYYYAGTSRLLTVGHPYFPIPKSSNNKVDVPKVSAFQYRVFRVRLPDPNKFGLPDARIYNPDAERLVWACTGVEVGRGQPLGVGLSGHPLYNKLEDTENSNIAHGPIGQDSRDNISVDNKQTQLCIIGCTPPMGEHWGKGTPCRNPPAQGDCPPLELITSPIQDGDMVDTGYGAMDFTALQLNKSDVPIDICQSTCKYPDYLGMAAEPYGDSMFFYLRREQLFARHFFNRASAVGDAIPDTFILKSNGGGRDVGSAVYSPTPSGSMVTSEAQLFNKPYWLRRAQGHNNGICWANQLFVTVVDTTRSTNMCLCVPSEASPATTYDATKFKEYLRHGEEYDLQFIFQLCKVTLTPDIMAYLHTMNSSLLEDWNFGLTLPPSTSLEDTYRFLSSSAITCQKDTPPTEKQDPYAKLNFWDVDLKDRFSLDLSQFPLGRKFLLQLGVRSRSAVSVRKRPATSATGSTAAKRKRTKK</sequence>
<keyword id="KW-0167">Capsid protein</keyword>
<keyword id="KW-1015">Disulfide bond</keyword>
<keyword id="KW-1048">Host nucleus</keyword>
<keyword id="KW-0945">Host-virus interaction</keyword>
<keyword id="KW-0426">Late protein</keyword>
<keyword id="KW-1185">Reference proteome</keyword>
<keyword id="KW-1145">T=7 icosahedral capsid protein</keyword>
<keyword id="KW-1161">Viral attachment to host cell</keyword>
<keyword id="KW-1162">Viral penetration into host cytoplasm</keyword>
<keyword id="KW-0946">Virion</keyword>
<keyword id="KW-1164">Virus endocytosis by host</keyword>
<keyword id="KW-1160">Virus entry into host cell</keyword>